<accession>P0DJP7</accession>
<keyword id="KW-0106">Calcium</keyword>
<keyword id="KW-0903">Direct protein sequencing</keyword>
<keyword id="KW-1015">Disulfide bond</keyword>
<keyword id="KW-0378">Hydrolase</keyword>
<keyword id="KW-0442">Lipid degradation</keyword>
<keyword id="KW-0443">Lipid metabolism</keyword>
<keyword id="KW-0479">Metal-binding</keyword>
<keyword id="KW-0964">Secreted</keyword>
<keyword id="KW-0800">Toxin</keyword>
<evidence type="ECO:0000250" key="1"/>
<evidence type="ECO:0000255" key="2">
    <source>
        <dbReference type="PROSITE-ProRule" id="PRU10035"/>
    </source>
</evidence>
<evidence type="ECO:0000255" key="3">
    <source>
        <dbReference type="PROSITE-ProRule" id="PRU10036"/>
    </source>
</evidence>
<evidence type="ECO:0000269" key="4">
    <source>
    </source>
</evidence>
<evidence type="ECO:0000305" key="5"/>
<feature type="chain" id="PRO_0000419069" description="Acidic phospholipase A2 Ts-A5">
    <location>
        <begin position="1"/>
        <end position="23" status="greater than"/>
    </location>
</feature>
<feature type="non-terminal residue">
    <location>
        <position position="23"/>
    </location>
</feature>
<name>PA2AE_TRIST</name>
<proteinExistence type="evidence at protein level"/>
<comment type="function">
    <text evidence="4">Snake venom phospholipase A2 (PLA2) that shows a moderate inhibition of ADP-induced human platelet aggregation when tested on platelet rich plasma. Exhibits high hydrolytic activities and prefers the anionic micelles (dPPC with deoxycholate) to the zwitterionic micelles (dPPC with Triton X-100). PLA2 catalyzes the calcium-dependent hydrolysis of the 2-acyl groups in 3-sn-phosphoglycerides.</text>
</comment>
<comment type="catalytic activity">
    <reaction evidence="2 3">
        <text>a 1,2-diacyl-sn-glycero-3-phosphocholine + H2O = a 1-acyl-sn-glycero-3-phosphocholine + a fatty acid + H(+)</text>
        <dbReference type="Rhea" id="RHEA:15801"/>
        <dbReference type="ChEBI" id="CHEBI:15377"/>
        <dbReference type="ChEBI" id="CHEBI:15378"/>
        <dbReference type="ChEBI" id="CHEBI:28868"/>
        <dbReference type="ChEBI" id="CHEBI:57643"/>
        <dbReference type="ChEBI" id="CHEBI:58168"/>
        <dbReference type="EC" id="3.1.1.4"/>
    </reaction>
</comment>
<comment type="cofactor">
    <cofactor evidence="1">
        <name>Ca(2+)</name>
        <dbReference type="ChEBI" id="CHEBI:29108"/>
    </cofactor>
    <text evidence="1">Binds 1 Ca(2+) ion.</text>
</comment>
<comment type="subcellular location">
    <subcellularLocation>
        <location>Secreted</location>
    </subcellularLocation>
</comment>
<comment type="tissue specificity">
    <text>Expressed by the venom gland.</text>
</comment>
<comment type="PTM">
    <text evidence="1">Contains 7 disulfide bonds.</text>
</comment>
<comment type="mass spectrometry" mass="13711.0" method="Electrospray" evidence="4"/>
<comment type="similarity">
    <text evidence="5">Belongs to the phospholipase A2 family. Group II subfamily.</text>
</comment>
<comment type="caution">
    <text evidence="5">According to PubMed:12959640, T.stejnegeri was formerly named T.gramineus, supposing that this protein is the same as PLA-III from T.gramineus. They have been kept separated, because T.gramineus and T.stejnegeri are considered as being two different species (see http://reptile-database.org).</text>
</comment>
<sequence length="23" mass="2651">NLMQFETLIMKVAGRSGVWYYGS</sequence>
<reference key="1">
    <citation type="journal article" date="2004" name="Biochem. J.">
        <title>Venom phospholipases A2 of bamboo viper (Trimeresurus stejnegeri): molecular characterization, geographic variations and evidence of multiple ancestries.</title>
        <authorList>
            <person name="Tsai I.-H."/>
            <person name="Wang Y.-M."/>
            <person name="Chen Y.-H."/>
            <person name="Tsai T.-S."/>
            <person name="Tu M.-C."/>
        </authorList>
    </citation>
    <scope>PROTEIN SEQUENCE</scope>
    <scope>FUNCTION</scope>
    <scope>MASS SPECTROMETRY</scope>
    <source>
        <strain>Chinese</strain>
        <strain>Taiwan</strain>
        <tissue>Venom</tissue>
    </source>
</reference>
<organism>
    <name type="scientific">Trimeresurus stejnegeri</name>
    <name type="common">Chinese green tree viper</name>
    <name type="synonym">Viridovipera stejnegeri</name>
    <dbReference type="NCBI Taxonomy" id="39682"/>
    <lineage>
        <taxon>Eukaryota</taxon>
        <taxon>Metazoa</taxon>
        <taxon>Chordata</taxon>
        <taxon>Craniata</taxon>
        <taxon>Vertebrata</taxon>
        <taxon>Euteleostomi</taxon>
        <taxon>Lepidosauria</taxon>
        <taxon>Squamata</taxon>
        <taxon>Bifurcata</taxon>
        <taxon>Unidentata</taxon>
        <taxon>Episquamata</taxon>
        <taxon>Toxicofera</taxon>
        <taxon>Serpentes</taxon>
        <taxon>Colubroidea</taxon>
        <taxon>Viperidae</taxon>
        <taxon>Crotalinae</taxon>
        <taxon>Trimeresurus</taxon>
    </lineage>
</organism>
<protein>
    <recommendedName>
        <fullName>Acidic phospholipase A2 Ts-A5</fullName>
        <shortName>svPLA2</shortName>
        <ecNumber>3.1.1.4</ecNumber>
    </recommendedName>
    <alternativeName>
        <fullName>CTs-A5</fullName>
    </alternativeName>
    <alternativeName>
        <fullName>Phosphatidylcholine 2-acylhydrolase</fullName>
    </alternativeName>
</protein>
<dbReference type="EC" id="3.1.1.4"/>
<dbReference type="GO" id="GO:0005576">
    <property type="term" value="C:extracellular region"/>
    <property type="evidence" value="ECO:0007669"/>
    <property type="project" value="UniProtKB-SubCell"/>
</dbReference>
<dbReference type="GO" id="GO:0046872">
    <property type="term" value="F:metal ion binding"/>
    <property type="evidence" value="ECO:0007669"/>
    <property type="project" value="UniProtKB-KW"/>
</dbReference>
<dbReference type="GO" id="GO:0004623">
    <property type="term" value="F:phospholipase A2 activity"/>
    <property type="evidence" value="ECO:0007669"/>
    <property type="project" value="UniProtKB-EC"/>
</dbReference>
<dbReference type="GO" id="GO:0090729">
    <property type="term" value="F:toxin activity"/>
    <property type="evidence" value="ECO:0007669"/>
    <property type="project" value="UniProtKB-KW"/>
</dbReference>
<dbReference type="GO" id="GO:0016042">
    <property type="term" value="P:lipid catabolic process"/>
    <property type="evidence" value="ECO:0007669"/>
    <property type="project" value="UniProtKB-KW"/>
</dbReference>